<proteinExistence type="inferred from homology"/>
<keyword id="KW-0067">ATP-binding</keyword>
<keyword id="KW-0963">Cytoplasm</keyword>
<keyword id="KW-0418">Kinase</keyword>
<keyword id="KW-0460">Magnesium</keyword>
<keyword id="KW-0479">Metal-binding</keyword>
<keyword id="KW-0546">Nucleotide metabolism</keyword>
<keyword id="KW-0547">Nucleotide-binding</keyword>
<keyword id="KW-0597">Phosphoprotein</keyword>
<keyword id="KW-0808">Transferase</keyword>
<evidence type="ECO:0000255" key="1">
    <source>
        <dbReference type="HAMAP-Rule" id="MF_00451"/>
    </source>
</evidence>
<comment type="function">
    <text evidence="1">Major role in the synthesis of nucleoside triphosphates other than ATP. The ATP gamma phosphate is transferred to the NDP beta phosphate via a ping-pong mechanism, using a phosphorylated active-site intermediate.</text>
</comment>
<comment type="catalytic activity">
    <reaction evidence="1">
        <text>a 2'-deoxyribonucleoside 5'-diphosphate + ATP = a 2'-deoxyribonucleoside 5'-triphosphate + ADP</text>
        <dbReference type="Rhea" id="RHEA:44640"/>
        <dbReference type="ChEBI" id="CHEBI:30616"/>
        <dbReference type="ChEBI" id="CHEBI:61560"/>
        <dbReference type="ChEBI" id="CHEBI:73316"/>
        <dbReference type="ChEBI" id="CHEBI:456216"/>
        <dbReference type="EC" id="2.7.4.6"/>
    </reaction>
</comment>
<comment type="catalytic activity">
    <reaction evidence="1">
        <text>a ribonucleoside 5'-diphosphate + ATP = a ribonucleoside 5'-triphosphate + ADP</text>
        <dbReference type="Rhea" id="RHEA:18113"/>
        <dbReference type="ChEBI" id="CHEBI:30616"/>
        <dbReference type="ChEBI" id="CHEBI:57930"/>
        <dbReference type="ChEBI" id="CHEBI:61557"/>
        <dbReference type="ChEBI" id="CHEBI:456216"/>
        <dbReference type="EC" id="2.7.4.6"/>
    </reaction>
</comment>
<comment type="cofactor">
    <cofactor evidence="1">
        <name>Mg(2+)</name>
        <dbReference type="ChEBI" id="CHEBI:18420"/>
    </cofactor>
</comment>
<comment type="subunit">
    <text evidence="1">Homotetramer.</text>
</comment>
<comment type="subcellular location">
    <subcellularLocation>
        <location evidence="1">Cytoplasm</location>
    </subcellularLocation>
</comment>
<comment type="similarity">
    <text evidence="1">Belongs to the NDK family.</text>
</comment>
<protein>
    <recommendedName>
        <fullName evidence="1">Nucleoside diphosphate kinase</fullName>
        <shortName evidence="1">NDK</shortName>
        <shortName evidence="1">NDP kinase</shortName>
        <ecNumber evidence="1">2.7.4.6</ecNumber>
    </recommendedName>
    <alternativeName>
        <fullName evidence="1">Nucleoside-2-P kinase</fullName>
    </alternativeName>
</protein>
<dbReference type="EC" id="2.7.4.6" evidence="1"/>
<dbReference type="EMBL" id="CP000577">
    <property type="protein sequence ID" value="ABN76648.1"/>
    <property type="molecule type" value="Genomic_DNA"/>
</dbReference>
<dbReference type="RefSeq" id="WP_002720049.1">
    <property type="nucleotide sequence ID" value="NC_009049.1"/>
</dbReference>
<dbReference type="SMR" id="A3PJY2"/>
<dbReference type="GeneID" id="67446634"/>
<dbReference type="KEGG" id="rsh:Rsph17029_1538"/>
<dbReference type="HOGENOM" id="CLU_060216_8_1_5"/>
<dbReference type="GO" id="GO:0005737">
    <property type="term" value="C:cytoplasm"/>
    <property type="evidence" value="ECO:0007669"/>
    <property type="project" value="UniProtKB-SubCell"/>
</dbReference>
<dbReference type="GO" id="GO:0005524">
    <property type="term" value="F:ATP binding"/>
    <property type="evidence" value="ECO:0007669"/>
    <property type="project" value="UniProtKB-UniRule"/>
</dbReference>
<dbReference type="GO" id="GO:0046872">
    <property type="term" value="F:metal ion binding"/>
    <property type="evidence" value="ECO:0007669"/>
    <property type="project" value="UniProtKB-KW"/>
</dbReference>
<dbReference type="GO" id="GO:0004550">
    <property type="term" value="F:nucleoside diphosphate kinase activity"/>
    <property type="evidence" value="ECO:0007669"/>
    <property type="project" value="UniProtKB-UniRule"/>
</dbReference>
<dbReference type="GO" id="GO:0006241">
    <property type="term" value="P:CTP biosynthetic process"/>
    <property type="evidence" value="ECO:0007669"/>
    <property type="project" value="UniProtKB-UniRule"/>
</dbReference>
<dbReference type="GO" id="GO:0006183">
    <property type="term" value="P:GTP biosynthetic process"/>
    <property type="evidence" value="ECO:0007669"/>
    <property type="project" value="UniProtKB-UniRule"/>
</dbReference>
<dbReference type="GO" id="GO:0006228">
    <property type="term" value="P:UTP biosynthetic process"/>
    <property type="evidence" value="ECO:0007669"/>
    <property type="project" value="UniProtKB-UniRule"/>
</dbReference>
<dbReference type="CDD" id="cd04413">
    <property type="entry name" value="NDPk_I"/>
    <property type="match status" value="1"/>
</dbReference>
<dbReference type="FunFam" id="3.30.70.141:FF:000003">
    <property type="entry name" value="Nucleoside diphosphate kinase"/>
    <property type="match status" value="1"/>
</dbReference>
<dbReference type="Gene3D" id="3.30.70.141">
    <property type="entry name" value="Nucleoside diphosphate kinase-like domain"/>
    <property type="match status" value="1"/>
</dbReference>
<dbReference type="HAMAP" id="MF_00451">
    <property type="entry name" value="NDP_kinase"/>
    <property type="match status" value="1"/>
</dbReference>
<dbReference type="InterPro" id="IPR034907">
    <property type="entry name" value="NDK-like_dom"/>
</dbReference>
<dbReference type="InterPro" id="IPR036850">
    <property type="entry name" value="NDK-like_dom_sf"/>
</dbReference>
<dbReference type="InterPro" id="IPR001564">
    <property type="entry name" value="Nucleoside_diP_kinase"/>
</dbReference>
<dbReference type="InterPro" id="IPR023005">
    <property type="entry name" value="Nucleoside_diP_kinase_AS"/>
</dbReference>
<dbReference type="NCBIfam" id="NF001908">
    <property type="entry name" value="PRK00668.1"/>
    <property type="match status" value="1"/>
</dbReference>
<dbReference type="PANTHER" id="PTHR46161">
    <property type="entry name" value="NUCLEOSIDE DIPHOSPHATE KINASE"/>
    <property type="match status" value="1"/>
</dbReference>
<dbReference type="PANTHER" id="PTHR46161:SF3">
    <property type="entry name" value="NUCLEOSIDE DIPHOSPHATE KINASE DDB_G0292928-RELATED"/>
    <property type="match status" value="1"/>
</dbReference>
<dbReference type="Pfam" id="PF00334">
    <property type="entry name" value="NDK"/>
    <property type="match status" value="1"/>
</dbReference>
<dbReference type="PRINTS" id="PR01243">
    <property type="entry name" value="NUCDPKINASE"/>
</dbReference>
<dbReference type="SMART" id="SM00562">
    <property type="entry name" value="NDK"/>
    <property type="match status" value="1"/>
</dbReference>
<dbReference type="SUPFAM" id="SSF54919">
    <property type="entry name" value="Nucleoside diphosphate kinase, NDK"/>
    <property type="match status" value="1"/>
</dbReference>
<dbReference type="PROSITE" id="PS00469">
    <property type="entry name" value="NDPK"/>
    <property type="match status" value="1"/>
</dbReference>
<dbReference type="PROSITE" id="PS51374">
    <property type="entry name" value="NDPK_LIKE"/>
    <property type="match status" value="1"/>
</dbReference>
<feature type="chain" id="PRO_1000026283" description="Nucleoside diphosphate kinase">
    <location>
        <begin position="1"/>
        <end position="140"/>
    </location>
</feature>
<feature type="active site" description="Pros-phosphohistidine intermediate" evidence="1">
    <location>
        <position position="117"/>
    </location>
</feature>
<feature type="binding site" evidence="1">
    <location>
        <position position="11"/>
    </location>
    <ligand>
        <name>ATP</name>
        <dbReference type="ChEBI" id="CHEBI:30616"/>
    </ligand>
</feature>
<feature type="binding site" evidence="1">
    <location>
        <position position="59"/>
    </location>
    <ligand>
        <name>ATP</name>
        <dbReference type="ChEBI" id="CHEBI:30616"/>
    </ligand>
</feature>
<feature type="binding site" evidence="1">
    <location>
        <position position="87"/>
    </location>
    <ligand>
        <name>ATP</name>
        <dbReference type="ChEBI" id="CHEBI:30616"/>
    </ligand>
</feature>
<feature type="binding site" evidence="1">
    <location>
        <position position="93"/>
    </location>
    <ligand>
        <name>ATP</name>
        <dbReference type="ChEBI" id="CHEBI:30616"/>
    </ligand>
</feature>
<feature type="binding site" evidence="1">
    <location>
        <position position="104"/>
    </location>
    <ligand>
        <name>ATP</name>
        <dbReference type="ChEBI" id="CHEBI:30616"/>
    </ligand>
</feature>
<feature type="binding site" evidence="1">
    <location>
        <position position="114"/>
    </location>
    <ligand>
        <name>ATP</name>
        <dbReference type="ChEBI" id="CHEBI:30616"/>
    </ligand>
</feature>
<reference key="1">
    <citation type="submission" date="2007-02" db="EMBL/GenBank/DDBJ databases">
        <title>Complete sequence of chromosome 1 of Rhodobacter sphaeroides ATCC 17029.</title>
        <authorList>
            <person name="Copeland A."/>
            <person name="Lucas S."/>
            <person name="Lapidus A."/>
            <person name="Barry K."/>
            <person name="Detter J.C."/>
            <person name="Glavina del Rio T."/>
            <person name="Hammon N."/>
            <person name="Israni S."/>
            <person name="Dalin E."/>
            <person name="Tice H."/>
            <person name="Pitluck S."/>
            <person name="Kiss H."/>
            <person name="Brettin T."/>
            <person name="Bruce D."/>
            <person name="Han C."/>
            <person name="Tapia R."/>
            <person name="Gilna P."/>
            <person name="Schmutz J."/>
            <person name="Larimer F."/>
            <person name="Land M."/>
            <person name="Hauser L."/>
            <person name="Kyrpides N."/>
            <person name="Mikhailova N."/>
            <person name="Richardson P."/>
            <person name="Mackenzie C."/>
            <person name="Choudhary M."/>
            <person name="Donohue T.J."/>
            <person name="Kaplan S."/>
        </authorList>
    </citation>
    <scope>NUCLEOTIDE SEQUENCE [LARGE SCALE GENOMIC DNA]</scope>
    <source>
        <strain>ATCC 17029 / ATH 2.4.9</strain>
    </source>
</reference>
<organism>
    <name type="scientific">Cereibacter sphaeroides (strain ATCC 17029 / ATH 2.4.9)</name>
    <name type="common">Rhodobacter sphaeroides</name>
    <dbReference type="NCBI Taxonomy" id="349101"/>
    <lineage>
        <taxon>Bacteria</taxon>
        <taxon>Pseudomonadati</taxon>
        <taxon>Pseudomonadota</taxon>
        <taxon>Alphaproteobacteria</taxon>
        <taxon>Rhodobacterales</taxon>
        <taxon>Paracoccaceae</taxon>
        <taxon>Cereibacter</taxon>
    </lineage>
</organism>
<accession>A3PJY2</accession>
<name>NDK_CERS1</name>
<sequence length="140" mass="15159">MAIERTLSIIKPDATRRNLTGKINAKFEEAGLRIVAQKRIHLSLAQAQKFYGVHKDRPFFGELTEFMASEPVVVQVLEGEGAIAKNREVMGATNPANADAGTIRKEFALSVGENSVHGSDAPETAAEEIAFFFSGLELVG</sequence>
<gene>
    <name evidence="1" type="primary">ndk</name>
    <name type="ordered locus">Rsph17029_1538</name>
</gene>